<keyword id="KW-0963">Cytoplasm</keyword>
<keyword id="KW-0235">DNA replication</keyword>
<keyword id="KW-0236">DNA replication inhibitor</keyword>
<keyword id="KW-0479">Metal-binding</keyword>
<keyword id="KW-0862">Zinc</keyword>
<evidence type="ECO:0000255" key="1">
    <source>
        <dbReference type="HAMAP-Rule" id="MF_01159"/>
    </source>
</evidence>
<comment type="function">
    <text evidence="1">Involved in control of chromosome replication initiation. Inhibits the cooperative binding of DnaA to the oriC region, thus negatively regulating initiation of chromosome replication. Inhibits the ability of DnaA-ATP to form a helix on DNA; does not disassemble preformed DnaA-DNA helices. Decreases the residence time of DnaA on the chromosome at its binding sites (oriC, replication forks and promoter-binding sites). Tethers DnaA to the replication machinery via the DNA polymerase beta sliding clamp subunit (dnaN). Associates with oriC and other DnaA targets on the chromosome in a DnaA-dependent manner.</text>
</comment>
<comment type="cofactor">
    <cofactor evidence="1">
        <name>Zn(2+)</name>
        <dbReference type="ChEBI" id="CHEBI:29105"/>
    </cofactor>
    <text evidence="1">Binds 1 zinc ion per subunit.</text>
</comment>
<comment type="subunit">
    <text evidence="1">Homotetramer. Interacts with both DnaA and DnaN, acting as a bridge between these two proteins.</text>
</comment>
<comment type="subcellular location">
    <subcellularLocation>
        <location evidence="1">Cytoplasm</location>
        <location evidence="1">Nucleoid</location>
    </subcellularLocation>
    <text evidence="1">Localizes in tight foci, which correspond to the replisome at mid-cell throughout the cell cycle.</text>
</comment>
<comment type="similarity">
    <text evidence="1">Belongs to the YabA family.</text>
</comment>
<reference key="1">
    <citation type="journal article" date="2010" name="Genome Biol.">
        <title>Structure and dynamics of the pan-genome of Streptococcus pneumoniae and closely related species.</title>
        <authorList>
            <person name="Donati C."/>
            <person name="Hiller N.L."/>
            <person name="Tettelin H."/>
            <person name="Muzzi A."/>
            <person name="Croucher N.J."/>
            <person name="Angiuoli S.V."/>
            <person name="Oggioni M."/>
            <person name="Dunning Hotopp J.C."/>
            <person name="Hu F.Z."/>
            <person name="Riley D.R."/>
            <person name="Covacci A."/>
            <person name="Mitchell T.J."/>
            <person name="Bentley S.D."/>
            <person name="Kilian M."/>
            <person name="Ehrlich G.D."/>
            <person name="Rappuoli R."/>
            <person name="Moxon E.R."/>
            <person name="Masignani V."/>
        </authorList>
    </citation>
    <scope>NUCLEOTIDE SEQUENCE [LARGE SCALE GENOMIC DNA]</scope>
    <source>
        <strain>JJA</strain>
    </source>
</reference>
<feature type="chain" id="PRO_1000164310" description="Replication initiation control protein YabA">
    <location>
        <begin position="1"/>
        <end position="105"/>
    </location>
</feature>
<feature type="binding site" evidence="1">
    <location>
        <position position="79"/>
    </location>
    <ligand>
        <name>Zn(2+)</name>
        <dbReference type="ChEBI" id="CHEBI:29105"/>
    </ligand>
</feature>
<feature type="binding site" evidence="1">
    <location>
        <position position="81"/>
    </location>
    <ligand>
        <name>Zn(2+)</name>
        <dbReference type="ChEBI" id="CHEBI:29105"/>
    </ligand>
</feature>
<feature type="binding site" evidence="1">
    <location>
        <position position="95"/>
    </location>
    <ligand>
        <name>Zn(2+)</name>
        <dbReference type="ChEBI" id="CHEBI:29105"/>
    </ligand>
</feature>
<feature type="binding site" evidence="1">
    <location>
        <position position="98"/>
    </location>
    <ligand>
        <name>Zn(2+)</name>
        <dbReference type="ChEBI" id="CHEBI:29105"/>
    </ligand>
</feature>
<proteinExistence type="inferred from homology"/>
<organism>
    <name type="scientific">Streptococcus pneumoniae (strain JJA)</name>
    <dbReference type="NCBI Taxonomy" id="488222"/>
    <lineage>
        <taxon>Bacteria</taxon>
        <taxon>Bacillati</taxon>
        <taxon>Bacillota</taxon>
        <taxon>Bacilli</taxon>
        <taxon>Lactobacillales</taxon>
        <taxon>Streptococcaceae</taxon>
        <taxon>Streptococcus</taxon>
    </lineage>
</organism>
<name>YABA_STRZJ</name>
<dbReference type="EMBL" id="CP000919">
    <property type="protein sequence ID" value="ACO18580.1"/>
    <property type="molecule type" value="Genomic_DNA"/>
</dbReference>
<dbReference type="RefSeq" id="WP_000358228.1">
    <property type="nucleotide sequence ID" value="NC_012466.1"/>
</dbReference>
<dbReference type="SMR" id="C1CDT3"/>
<dbReference type="GeneID" id="93739792"/>
<dbReference type="KEGG" id="sjj:SPJ_0876"/>
<dbReference type="HOGENOM" id="CLU_157169_0_0_9"/>
<dbReference type="Proteomes" id="UP000002206">
    <property type="component" value="Chromosome"/>
</dbReference>
<dbReference type="GO" id="GO:0009295">
    <property type="term" value="C:nucleoid"/>
    <property type="evidence" value="ECO:0007669"/>
    <property type="project" value="UniProtKB-SubCell"/>
</dbReference>
<dbReference type="GO" id="GO:0006260">
    <property type="term" value="P:DNA replication"/>
    <property type="evidence" value="ECO:0007669"/>
    <property type="project" value="UniProtKB-UniRule"/>
</dbReference>
<dbReference type="HAMAP" id="MF_01159">
    <property type="entry name" value="YabA"/>
    <property type="match status" value="1"/>
</dbReference>
<dbReference type="InterPro" id="IPR010377">
    <property type="entry name" value="YabA"/>
</dbReference>
<dbReference type="NCBIfam" id="NF009640">
    <property type="entry name" value="PRK13169.1-1"/>
    <property type="match status" value="1"/>
</dbReference>
<dbReference type="Pfam" id="PF06156">
    <property type="entry name" value="YabA"/>
    <property type="match status" value="1"/>
</dbReference>
<dbReference type="PIRSF" id="PIRSF021439">
    <property type="entry name" value="DUF972"/>
    <property type="match status" value="1"/>
</dbReference>
<sequence length="105" mass="12411">MDKKELFDALDDFSQQLLVTLADVEAIKKNLKSLVEENTALRLENSKLRERLGEVEADAPVKAKHVRESVRRIYRDGFHVCNDFYGQRREQDEECMFCDELLYRE</sequence>
<gene>
    <name evidence="1" type="primary">yabA</name>
    <name type="ordered locus">SPJ_0876</name>
</gene>
<protein>
    <recommendedName>
        <fullName evidence="1">Replication initiation control protein YabA</fullName>
    </recommendedName>
</protein>
<accession>C1CDT3</accession>